<evidence type="ECO:0000256" key="1">
    <source>
        <dbReference type="SAM" id="MobiDB-lite"/>
    </source>
</evidence>
<evidence type="ECO:0000269" key="2">
    <source>
    </source>
</evidence>
<evidence type="ECO:0000269" key="3">
    <source>
    </source>
</evidence>
<evidence type="ECO:0000269" key="4">
    <source>
    </source>
</evidence>
<evidence type="ECO:0000269" key="5">
    <source>
    </source>
</evidence>
<evidence type="ECO:0000269" key="6">
    <source>
    </source>
</evidence>
<evidence type="ECO:0000269" key="7">
    <source>
    </source>
</evidence>
<evidence type="ECO:0000269" key="8">
    <source>
    </source>
</evidence>
<evidence type="ECO:0000269" key="9">
    <source>
    </source>
</evidence>
<evidence type="ECO:0000269" key="10">
    <source>
    </source>
</evidence>
<evidence type="ECO:0000269" key="11">
    <source>
    </source>
</evidence>
<evidence type="ECO:0000269" key="12">
    <source>
    </source>
</evidence>
<evidence type="ECO:0000269" key="13">
    <source>
    </source>
</evidence>
<evidence type="ECO:0000305" key="14"/>
<evidence type="ECO:0007744" key="15">
    <source>
    </source>
</evidence>
<evidence type="ECO:0007744" key="16">
    <source>
    </source>
</evidence>
<evidence type="ECO:0007829" key="17">
    <source>
        <dbReference type="PDB" id="3H4L"/>
    </source>
</evidence>
<evidence type="ECO:0007829" key="18">
    <source>
        <dbReference type="PDB" id="4E4W"/>
    </source>
</evidence>
<accession>P14242</accession>
<accession>D6W197</accession>
<accession>Q2I044</accession>
<accession>Q2I045</accession>
<accession>Q45TY4</accession>
<accession>Q8TG48</accession>
<accession>Q8TG50</accession>
<accession>Q8TG54</accession>
<accession>Q8TG57</accession>
<keyword id="KW-0002">3D-structure</keyword>
<keyword id="KW-0227">DNA damage</keyword>
<keyword id="KW-0234">DNA repair</keyword>
<keyword id="KW-0539">Nucleus</keyword>
<keyword id="KW-0597">Phosphoprotein</keyword>
<keyword id="KW-1185">Reference proteome</keyword>
<gene>
    <name type="primary">PMS1</name>
    <name type="ordered locus">YNL082W</name>
    <name type="ORF">N2317</name>
</gene>
<organism>
    <name type="scientific">Saccharomyces cerevisiae (strain ATCC 204508 / S288c)</name>
    <name type="common">Baker's yeast</name>
    <dbReference type="NCBI Taxonomy" id="559292"/>
    <lineage>
        <taxon>Eukaryota</taxon>
        <taxon>Fungi</taxon>
        <taxon>Dikarya</taxon>
        <taxon>Ascomycota</taxon>
        <taxon>Saccharomycotina</taxon>
        <taxon>Saccharomycetes</taxon>
        <taxon>Saccharomycetales</taxon>
        <taxon>Saccharomycetaceae</taxon>
        <taxon>Saccharomyces</taxon>
    </lineage>
</organism>
<feature type="chain" id="PRO_0000245571" description="DNA mismatch repair protein PMS1">
    <location>
        <begin position="1"/>
        <end position="873"/>
    </location>
</feature>
<feature type="region of interest" description="DNA- and ATP-binding">
    <location>
        <begin position="1"/>
        <end position="357"/>
    </location>
</feature>
<feature type="region of interest" description="Disordered" evidence="1">
    <location>
        <begin position="379"/>
        <end position="423"/>
    </location>
</feature>
<feature type="region of interest" description="Interaction with MLH1">
    <location>
        <begin position="661"/>
        <end position="873"/>
    </location>
</feature>
<feature type="compositionally biased region" description="Basic and acidic residues" evidence="1">
    <location>
        <begin position="379"/>
        <end position="402"/>
    </location>
</feature>
<feature type="compositionally biased region" description="Polar residues" evidence="1">
    <location>
        <begin position="403"/>
        <end position="423"/>
    </location>
</feature>
<feature type="modified residue" description="Phosphoserine" evidence="15">
    <location>
        <position position="393"/>
    </location>
</feature>
<feature type="modified residue" description="Phosphoserine" evidence="16">
    <location>
        <position position="566"/>
    </location>
</feature>
<feature type="sequence variant" description="In strain: SK1 and YJM421." evidence="5 10">
    <original>N</original>
    <variation>S</variation>
    <location>
        <position position="41"/>
    </location>
</feature>
<feature type="sequence variant" description="In strain: SK1 and YJM421." evidence="5 10">
    <original>I</original>
    <variation>T</variation>
    <location>
        <position position="112"/>
    </location>
</feature>
<feature type="sequence variant" description="In strain: SK1, YJM320, YJM339 and YJM421." evidence="5 10">
    <original>F</original>
    <variation>V</variation>
    <location>
        <position position="384"/>
    </location>
</feature>
<feature type="sequence variant" description="In strain: YJM320." evidence="5">
    <original>E</original>
    <variation>V</variation>
    <location>
        <position position="392"/>
    </location>
</feature>
<feature type="sequence variant" description="In strain: SK1, YJM320, YJM339 and YJM421." evidence="5 10">
    <original>T</original>
    <variation>S</variation>
    <location>
        <position position="400"/>
    </location>
</feature>
<feature type="sequence variant" description="In strain: YJM320 and YJM421." evidence="5">
    <original>A</original>
    <variation>S</variation>
    <location>
        <position position="401"/>
    </location>
</feature>
<feature type="sequence variant" description="In strain: SK1, YJM320, YJM339 and YJM421." evidence="5 10">
    <original>T</original>
    <variation>TCEGT</variation>
    <location>
        <position position="416"/>
    </location>
</feature>
<feature type="sequence variant" description="In strain: EAY1068." evidence="11">
    <original>D</original>
    <variation>Y</variation>
    <location>
        <position position="458"/>
    </location>
</feature>
<feature type="sequence variant" description="In strain: YJM339." evidence="5">
    <original>D</original>
    <variation>N</variation>
    <location>
        <position position="475"/>
    </location>
</feature>
<feature type="sequence variant" description="In strain: SK1." evidence="10">
    <original>Y</original>
    <variation>F</variation>
    <location>
        <position position="513"/>
    </location>
</feature>
<feature type="sequence variant" description="In strain: YJM320." evidence="5">
    <original>A</original>
    <variation>V</variation>
    <location>
        <position position="564"/>
    </location>
</feature>
<feature type="sequence variant" description="In strain: YJM320." evidence="5">
    <original>K</original>
    <variation>R</variation>
    <location>
        <position position="768"/>
    </location>
</feature>
<feature type="sequence variant" description="In strain: SK1 and YJM320; forms a non-functional heterodimer with MHL1 from strain S288c, resulting in an accumulation of mutations in spore progeny of crosses between these strains." evidence="5 10">
    <original>R</original>
    <variation>K</variation>
    <location>
        <position position="818"/>
    </location>
</feature>
<feature type="mutagenesis site" description="Reduces ATPase activity by 62%. Displays 60-fold increase in spontaneous mutation accumulation." evidence="3 4">
    <original>E</original>
    <variation>A</variation>
    <location>
        <position position="30"/>
    </location>
</feature>
<feature type="mutagenesis site" description="Reduces ATPase activity by 84%. Displays 11000-fold increase in spontaneous mutation accumulation." evidence="4">
    <original>N</original>
    <variation>A</variation>
    <location>
        <position position="34"/>
    </location>
</feature>
<feature type="mutagenesis site" description="Displays an increase in spontaneous mutation accumulation. Does not impair heterodimer formation." evidence="12">
    <original>F</original>
    <variation>A</variation>
    <location>
        <position position="95"/>
    </location>
</feature>
<feature type="mutagenesis site" description="Displays an increase in spontaneous mutation accumulation." evidence="3">
    <original>G</original>
    <variation>A</variation>
    <location>
        <position position="97"/>
    </location>
</feature>
<feature type="mutagenesis site" description="Displays a 60-fold increase in spontaneous mutation accumulation." evidence="6">
    <original>K</original>
    <variation>E</variation>
    <location>
        <position position="297"/>
    </location>
</feature>
<feature type="mutagenesis site" description="Confers a strong defect in the repair of primer strand-specific 1-bp loops during DNA replication, but not during meoitic recombination. Does not impair heterodimer formation." evidence="9">
    <original>G</original>
    <variation>E</variation>
    <location>
        <position position="851"/>
    </location>
</feature>
<feature type="mutagenesis site" description="Confers a strong defect in the repair of primer strand-specific 1-bp loops during DNA replication, but not during meoitic recombination. Does not impair heterodimer formation." evidence="9">
    <original>H</original>
    <variation>R</variation>
    <location>
        <position position="857"/>
    </location>
</feature>
<feature type="sequence conflict" description="In Ref. 1; AAA34885." evidence="14" ref="1">
    <original>Y</original>
    <variation>S</variation>
    <location>
        <position position="695"/>
    </location>
</feature>
<feature type="sequence conflict" description="In Ref. 1; AAA34885." evidence="14" ref="1">
    <original>L</original>
    <variation>I</variation>
    <location>
        <position position="861"/>
    </location>
</feature>
<feature type="helix" evidence="17">
    <location>
        <begin position="13"/>
        <end position="20"/>
    </location>
</feature>
<feature type="helix" evidence="17">
    <location>
        <begin position="24"/>
        <end position="37"/>
    </location>
</feature>
<feature type="strand" evidence="17">
    <location>
        <begin position="41"/>
        <end position="48"/>
    </location>
</feature>
<feature type="turn" evidence="17">
    <location>
        <begin position="49"/>
        <end position="52"/>
    </location>
</feature>
<feature type="strand" evidence="17">
    <location>
        <begin position="53"/>
        <end position="59"/>
    </location>
</feature>
<feature type="helix" evidence="17">
    <location>
        <begin position="66"/>
        <end position="68"/>
    </location>
</feature>
<feature type="turn" evidence="17">
    <location>
        <begin position="69"/>
        <end position="73"/>
    </location>
</feature>
<feature type="strand" evidence="17">
    <location>
        <begin position="92"/>
        <end position="95"/>
    </location>
</feature>
<feature type="helix" evidence="17">
    <location>
        <begin position="98"/>
        <end position="105"/>
    </location>
</feature>
<feature type="strand" evidence="17">
    <location>
        <begin position="106"/>
        <end position="116"/>
    </location>
</feature>
<feature type="strand" evidence="17">
    <location>
        <begin position="120"/>
        <end position="125"/>
    </location>
</feature>
<feature type="strand" evidence="17">
    <location>
        <begin position="131"/>
        <end position="137"/>
    </location>
</feature>
<feature type="strand" evidence="17">
    <location>
        <begin position="140"/>
        <end position="149"/>
    </location>
</feature>
<feature type="turn" evidence="17">
    <location>
        <begin position="150"/>
        <end position="153"/>
    </location>
</feature>
<feature type="helix" evidence="17">
    <location>
        <begin position="155"/>
        <end position="162"/>
    </location>
</feature>
<feature type="helix" evidence="17">
    <location>
        <begin position="165"/>
        <end position="182"/>
    </location>
</feature>
<feature type="strand" evidence="17">
    <location>
        <begin position="187"/>
        <end position="193"/>
    </location>
</feature>
<feature type="strand" evidence="17">
    <location>
        <begin position="199"/>
        <end position="204"/>
    </location>
</feature>
<feature type="helix" evidence="17">
    <location>
        <begin position="211"/>
        <end position="219"/>
    </location>
</feature>
<feature type="turn" evidence="17">
    <location>
        <begin position="221"/>
        <end position="226"/>
    </location>
</feature>
<feature type="strand" evidence="17">
    <location>
        <begin position="227"/>
        <end position="235"/>
    </location>
</feature>
<feature type="helix" evidence="17">
    <location>
        <begin position="237"/>
        <end position="239"/>
    </location>
</feature>
<feature type="strand" evidence="17">
    <location>
        <begin position="259"/>
        <end position="267"/>
    </location>
</feature>
<feature type="strand" evidence="17">
    <location>
        <begin position="274"/>
        <end position="285"/>
    </location>
</feature>
<feature type="strand" evidence="17">
    <location>
        <begin position="288"/>
        <end position="290"/>
    </location>
</feature>
<feature type="helix" evidence="17">
    <location>
        <begin position="293"/>
        <end position="304"/>
    </location>
</feature>
<feature type="strand" evidence="17">
    <location>
        <begin position="314"/>
        <end position="319"/>
    </location>
</feature>
<feature type="helix" evidence="17">
    <location>
        <begin position="322"/>
        <end position="324"/>
    </location>
</feature>
<feature type="strand" evidence="17">
    <location>
        <begin position="330"/>
        <end position="332"/>
    </location>
</feature>
<feature type="helix" evidence="17">
    <location>
        <begin position="341"/>
        <end position="361"/>
    </location>
</feature>
<feature type="helix" evidence="18">
    <location>
        <begin position="650"/>
        <end position="652"/>
    </location>
</feature>
<feature type="helix" evidence="18">
    <location>
        <begin position="653"/>
        <end position="665"/>
    </location>
</feature>
<feature type="helix" evidence="18">
    <location>
        <begin position="668"/>
        <end position="672"/>
    </location>
</feature>
<feature type="strand" evidence="18">
    <location>
        <begin position="675"/>
        <end position="680"/>
    </location>
</feature>
<feature type="turn" evidence="18">
    <location>
        <begin position="681"/>
        <end position="683"/>
    </location>
</feature>
<feature type="strand" evidence="18">
    <location>
        <begin position="684"/>
        <end position="690"/>
    </location>
</feature>
<feature type="strand" evidence="18">
    <location>
        <begin position="695"/>
        <end position="701"/>
    </location>
</feature>
<feature type="helix" evidence="18">
    <location>
        <begin position="702"/>
        <end position="717"/>
    </location>
</feature>
<feature type="strand" evidence="18">
    <location>
        <begin position="722"/>
        <end position="731"/>
    </location>
</feature>
<feature type="helix" evidence="18">
    <location>
        <begin position="739"/>
        <end position="742"/>
    </location>
</feature>
<feature type="helix" evidence="18">
    <location>
        <begin position="747"/>
        <end position="750"/>
    </location>
</feature>
<feature type="strand" evidence="18">
    <location>
        <begin position="767"/>
        <end position="773"/>
    </location>
</feature>
<feature type="helix" evidence="18">
    <location>
        <begin position="782"/>
        <end position="794"/>
    </location>
</feature>
<feature type="helix" evidence="18">
    <location>
        <begin position="806"/>
        <end position="819"/>
    </location>
</feature>
<feature type="helix" evidence="18">
    <location>
        <begin position="829"/>
        <end position="838"/>
    </location>
</feature>
<feature type="helix" evidence="18">
    <location>
        <begin position="839"/>
        <end position="841"/>
    </location>
</feature>
<feature type="strand" evidence="18">
    <location>
        <begin position="842"/>
        <end position="844"/>
    </location>
</feature>
<feature type="strand" evidence="18">
    <location>
        <begin position="853"/>
        <end position="860"/>
    </location>
</feature>
<feature type="helix" evidence="18">
    <location>
        <begin position="869"/>
        <end position="871"/>
    </location>
</feature>
<proteinExistence type="evidence at protein level"/>
<dbReference type="EMBL" id="M29688">
    <property type="protein sequence ID" value="AAA34885.1"/>
    <property type="status" value="ALT_INIT"/>
    <property type="molecule type" value="Genomic_DNA"/>
</dbReference>
<dbReference type="EMBL" id="AF458969">
    <property type="protein sequence ID" value="AAM00521.1"/>
    <property type="status" value="ALT_INIT"/>
    <property type="molecule type" value="Genomic_DNA"/>
</dbReference>
<dbReference type="EMBL" id="AF458971">
    <property type="protein sequence ID" value="AAM00533.1"/>
    <property type="status" value="ALT_INIT"/>
    <property type="molecule type" value="Genomic_DNA"/>
</dbReference>
<dbReference type="EMBL" id="AF458973">
    <property type="protein sequence ID" value="AAM00545.1"/>
    <property type="status" value="ALT_INIT"/>
    <property type="molecule type" value="Genomic_DNA"/>
</dbReference>
<dbReference type="EMBL" id="AF458974">
    <property type="protein sequence ID" value="AAM00551.1"/>
    <property type="status" value="ALT_INIT"/>
    <property type="molecule type" value="Genomic_DNA"/>
</dbReference>
<dbReference type="EMBL" id="AF458976">
    <property type="protein sequence ID" value="AAM00563.1"/>
    <property type="status" value="ALT_INIT"/>
    <property type="molecule type" value="Genomic_DNA"/>
</dbReference>
<dbReference type="EMBL" id="AF458977">
    <property type="protein sequence ID" value="AAM00569.1"/>
    <property type="status" value="ALT_INIT"/>
    <property type="molecule type" value="Genomic_DNA"/>
</dbReference>
<dbReference type="EMBL" id="DQ115393">
    <property type="protein sequence ID" value="AAZ22526.1"/>
    <property type="molecule type" value="Genomic_DNA"/>
</dbReference>
<dbReference type="EMBL" id="DQ356628">
    <property type="protein sequence ID" value="ABC86932.1"/>
    <property type="molecule type" value="Genomic_DNA"/>
</dbReference>
<dbReference type="EMBL" id="DQ356629">
    <property type="protein sequence ID" value="ABC86933.1"/>
    <property type="molecule type" value="Genomic_DNA"/>
</dbReference>
<dbReference type="EMBL" id="DQ356630">
    <property type="protein sequence ID" value="ABC86934.1"/>
    <property type="molecule type" value="Genomic_DNA"/>
</dbReference>
<dbReference type="EMBL" id="DQ356631">
    <property type="protein sequence ID" value="ABC86935.1"/>
    <property type="molecule type" value="Genomic_DNA"/>
</dbReference>
<dbReference type="EMBL" id="DQ356632">
    <property type="protein sequence ID" value="ABC86936.1"/>
    <property type="molecule type" value="Genomic_DNA"/>
</dbReference>
<dbReference type="EMBL" id="X86470">
    <property type="protein sequence ID" value="CAA60176.1"/>
    <property type="status" value="ALT_INIT"/>
    <property type="molecule type" value="Genomic_DNA"/>
</dbReference>
<dbReference type="EMBL" id="Z71357">
    <property type="protein sequence ID" value="CAA95956.1"/>
    <property type="status" value="ALT_INIT"/>
    <property type="molecule type" value="Genomic_DNA"/>
</dbReference>
<dbReference type="EMBL" id="Z71358">
    <property type="protein sequence ID" value="CAA95957.1"/>
    <property type="status" value="ALT_INIT"/>
    <property type="molecule type" value="Genomic_DNA"/>
</dbReference>
<dbReference type="EMBL" id="X89016">
    <property type="protein sequence ID" value="CAA61428.1"/>
    <property type="status" value="ALT_INIT"/>
    <property type="molecule type" value="Genomic_DNA"/>
</dbReference>
<dbReference type="EMBL" id="BK006947">
    <property type="protein sequence ID" value="DAA10463.1"/>
    <property type="molecule type" value="Genomic_DNA"/>
</dbReference>
<dbReference type="PIR" id="S53896">
    <property type="entry name" value="S53896"/>
</dbReference>
<dbReference type="RefSeq" id="NP_014317.4">
    <property type="nucleotide sequence ID" value="NM_001182920.3"/>
</dbReference>
<dbReference type="PDB" id="3H4L">
    <property type="method" value="X-ray"/>
    <property type="resolution" value="2.50 A"/>
    <property type="chains" value="A/B=1-365"/>
</dbReference>
<dbReference type="PDB" id="4E4W">
    <property type="method" value="X-ray"/>
    <property type="resolution" value="2.50 A"/>
    <property type="chains" value="B=635-873"/>
</dbReference>
<dbReference type="PDB" id="4FMN">
    <property type="method" value="X-ray"/>
    <property type="resolution" value="2.69 A"/>
    <property type="chains" value="B=635-873"/>
</dbReference>
<dbReference type="PDB" id="4FMO">
    <property type="method" value="X-ray"/>
    <property type="resolution" value="3.04 A"/>
    <property type="chains" value="B=635-873"/>
</dbReference>
<dbReference type="PDBsum" id="3H4L"/>
<dbReference type="PDBsum" id="4E4W"/>
<dbReference type="PDBsum" id="4FMN"/>
<dbReference type="PDBsum" id="4FMO"/>
<dbReference type="SMR" id="P14242"/>
<dbReference type="BioGRID" id="35741">
    <property type="interactions" value="250"/>
</dbReference>
<dbReference type="ComplexPortal" id="CPX-1666">
    <property type="entry name" value="MutLalpha endonuclease complex"/>
</dbReference>
<dbReference type="DIP" id="DIP-2416N"/>
<dbReference type="FunCoup" id="P14242">
    <property type="interactions" value="864"/>
</dbReference>
<dbReference type="IntAct" id="P14242">
    <property type="interactions" value="8"/>
</dbReference>
<dbReference type="MINT" id="P14242"/>
<dbReference type="STRING" id="4932.YNL082W"/>
<dbReference type="iPTMnet" id="P14242"/>
<dbReference type="PaxDb" id="4932-YNL082W"/>
<dbReference type="PeptideAtlas" id="P14242"/>
<dbReference type="EnsemblFungi" id="YNL082W_mRNA">
    <property type="protein sequence ID" value="YNL082W"/>
    <property type="gene ID" value="YNL082W"/>
</dbReference>
<dbReference type="GeneID" id="855642"/>
<dbReference type="KEGG" id="sce:YNL082W"/>
<dbReference type="AGR" id="SGD:S000005026"/>
<dbReference type="SGD" id="S000005026">
    <property type="gene designation" value="PMS1"/>
</dbReference>
<dbReference type="VEuPathDB" id="FungiDB:YNL082W"/>
<dbReference type="eggNOG" id="KOG1978">
    <property type="taxonomic scope" value="Eukaryota"/>
</dbReference>
<dbReference type="GeneTree" id="ENSGT00940000155381"/>
<dbReference type="HOGENOM" id="CLU_004131_0_2_1"/>
<dbReference type="InParanoid" id="P14242"/>
<dbReference type="OMA" id="SFNNVQY"/>
<dbReference type="OrthoDB" id="10263226at2759"/>
<dbReference type="BioCyc" id="YEAST:G3O-33111-MONOMER"/>
<dbReference type="Reactome" id="R-SCE-5358565">
    <property type="pathway name" value="Mismatch repair (MMR) directed by MSH2:MSH6 (MutSalpha)"/>
</dbReference>
<dbReference type="SABIO-RK" id="P14242"/>
<dbReference type="BioGRID-ORCS" id="855642">
    <property type="hits" value="6 hits in 10 CRISPR screens"/>
</dbReference>
<dbReference type="EvolutionaryTrace" id="P14242"/>
<dbReference type="PRO" id="PR:P14242"/>
<dbReference type="Proteomes" id="UP000002311">
    <property type="component" value="Chromosome XIV"/>
</dbReference>
<dbReference type="RNAct" id="P14242">
    <property type="molecule type" value="protein"/>
</dbReference>
<dbReference type="GO" id="GO:0005737">
    <property type="term" value="C:cytoplasm"/>
    <property type="evidence" value="ECO:0007005"/>
    <property type="project" value="SGD"/>
</dbReference>
<dbReference type="GO" id="GO:0032389">
    <property type="term" value="C:MutLalpha complex"/>
    <property type="evidence" value="ECO:0000353"/>
    <property type="project" value="ComplexPortal"/>
</dbReference>
<dbReference type="GO" id="GO:0005634">
    <property type="term" value="C:nucleus"/>
    <property type="evidence" value="ECO:0007005"/>
    <property type="project" value="SGD"/>
</dbReference>
<dbReference type="GO" id="GO:0005524">
    <property type="term" value="F:ATP binding"/>
    <property type="evidence" value="ECO:0000315"/>
    <property type="project" value="SGD"/>
</dbReference>
<dbReference type="GO" id="GO:0016887">
    <property type="term" value="F:ATP hydrolysis activity"/>
    <property type="evidence" value="ECO:0000314"/>
    <property type="project" value="SGD"/>
</dbReference>
<dbReference type="GO" id="GO:0140664">
    <property type="term" value="F:ATP-dependent DNA damage sensor activity"/>
    <property type="evidence" value="ECO:0007669"/>
    <property type="project" value="InterPro"/>
</dbReference>
<dbReference type="GO" id="GO:0030983">
    <property type="term" value="F:mismatched DNA binding"/>
    <property type="evidence" value="ECO:0007669"/>
    <property type="project" value="InterPro"/>
</dbReference>
<dbReference type="GO" id="GO:0000710">
    <property type="term" value="P:meiotic mismatch repair"/>
    <property type="evidence" value="ECO:0000314"/>
    <property type="project" value="ComplexPortal"/>
</dbReference>
<dbReference type="GO" id="GO:0006298">
    <property type="term" value="P:mismatch repair"/>
    <property type="evidence" value="ECO:0000315"/>
    <property type="project" value="SGD"/>
</dbReference>
<dbReference type="CDD" id="cd16926">
    <property type="entry name" value="HATPase_MutL-MLH-PMS-like"/>
    <property type="match status" value="1"/>
</dbReference>
<dbReference type="CDD" id="cd03484">
    <property type="entry name" value="MutL_Trans_hPMS_2_like"/>
    <property type="match status" value="1"/>
</dbReference>
<dbReference type="FunFam" id="3.30.1370.100:FF:000001">
    <property type="entry name" value="Mismatch repair endonuclease pms1, putative"/>
    <property type="match status" value="1"/>
</dbReference>
<dbReference type="FunFam" id="3.30.565.10:FF:000014">
    <property type="entry name" value="Mismatch repair endonuclease pms1, putative"/>
    <property type="match status" value="1"/>
</dbReference>
<dbReference type="FunFam" id="3.30.230.10:FF:000070">
    <property type="entry name" value="mismatch repair endonuclease PMS2"/>
    <property type="match status" value="1"/>
</dbReference>
<dbReference type="Gene3D" id="3.30.230.10">
    <property type="match status" value="1"/>
</dbReference>
<dbReference type="Gene3D" id="3.30.565.10">
    <property type="entry name" value="Histidine kinase-like ATPase, C-terminal domain"/>
    <property type="match status" value="1"/>
</dbReference>
<dbReference type="Gene3D" id="3.30.1540.20">
    <property type="entry name" value="MutL, C-terminal domain, dimerisation subdomain"/>
    <property type="match status" value="1"/>
</dbReference>
<dbReference type="Gene3D" id="3.30.1370.100">
    <property type="entry name" value="MutL, C-terminal domain, regulatory subdomain"/>
    <property type="match status" value="1"/>
</dbReference>
<dbReference type="InterPro" id="IPR014762">
    <property type="entry name" value="DNA_mismatch_repair_CS"/>
</dbReference>
<dbReference type="InterPro" id="IPR013507">
    <property type="entry name" value="DNA_mismatch_S5_2-like"/>
</dbReference>
<dbReference type="InterPro" id="IPR036890">
    <property type="entry name" value="HATPase_C_sf"/>
</dbReference>
<dbReference type="InterPro" id="IPR002099">
    <property type="entry name" value="MutL/Mlh/PMS"/>
</dbReference>
<dbReference type="InterPro" id="IPR038973">
    <property type="entry name" value="MutL/Mlh/Pms-like"/>
</dbReference>
<dbReference type="InterPro" id="IPR014790">
    <property type="entry name" value="MutL_C"/>
</dbReference>
<dbReference type="InterPro" id="IPR042120">
    <property type="entry name" value="MutL_C_dimsub"/>
</dbReference>
<dbReference type="InterPro" id="IPR042121">
    <property type="entry name" value="MutL_C_regsub"/>
</dbReference>
<dbReference type="InterPro" id="IPR037198">
    <property type="entry name" value="MutL_C_sf"/>
</dbReference>
<dbReference type="InterPro" id="IPR020568">
    <property type="entry name" value="Ribosomal_Su5_D2-typ_SF"/>
</dbReference>
<dbReference type="InterPro" id="IPR014721">
    <property type="entry name" value="Ribsml_uS5_D2-typ_fold_subgr"/>
</dbReference>
<dbReference type="NCBIfam" id="TIGR00585">
    <property type="entry name" value="mutl"/>
    <property type="match status" value="1"/>
</dbReference>
<dbReference type="PANTHER" id="PTHR10073">
    <property type="entry name" value="DNA MISMATCH REPAIR PROTEIN MLH, PMS, MUTL"/>
    <property type="match status" value="1"/>
</dbReference>
<dbReference type="PANTHER" id="PTHR10073:SF52">
    <property type="entry name" value="MISMATCH REPAIR ENDONUCLEASE PMS2"/>
    <property type="match status" value="1"/>
</dbReference>
<dbReference type="Pfam" id="PF01119">
    <property type="entry name" value="DNA_mis_repair"/>
    <property type="match status" value="1"/>
</dbReference>
<dbReference type="Pfam" id="PF13589">
    <property type="entry name" value="HATPase_c_3"/>
    <property type="match status" value="1"/>
</dbReference>
<dbReference type="Pfam" id="PF08676">
    <property type="entry name" value="MutL_C"/>
    <property type="match status" value="1"/>
</dbReference>
<dbReference type="SMART" id="SM01340">
    <property type="entry name" value="DNA_mis_repair"/>
    <property type="match status" value="1"/>
</dbReference>
<dbReference type="SMART" id="SM00853">
    <property type="entry name" value="MutL_C"/>
    <property type="match status" value="1"/>
</dbReference>
<dbReference type="SUPFAM" id="SSF55874">
    <property type="entry name" value="ATPase domain of HSP90 chaperone/DNA topoisomerase II/histidine kinase"/>
    <property type="match status" value="1"/>
</dbReference>
<dbReference type="SUPFAM" id="SSF118116">
    <property type="entry name" value="DNA mismatch repair protein MutL"/>
    <property type="match status" value="1"/>
</dbReference>
<dbReference type="SUPFAM" id="SSF54211">
    <property type="entry name" value="Ribosomal protein S5 domain 2-like"/>
    <property type="match status" value="1"/>
</dbReference>
<dbReference type="PROSITE" id="PS00058">
    <property type="entry name" value="DNA_MISMATCH_REPAIR_1"/>
    <property type="match status" value="1"/>
</dbReference>
<comment type="function">
    <text evidence="2 9 13">Required for DNA mismatch repair (MMR), correcting base-base mismatches and insertion-deletion loops (IDLs) resulting from DNA replication, DNA damage or from recombination events between non-identical sequences during meiosis. Component of the MutLalpha heterodimer that forms a ternary complex with the MutS heterodimers, which initially recognize the DNA mismatches. This complex is thought to be responsible for directing the downstream MMR events, including strand discrimination, excision, and resynthesis. Plays a major role in maintaining the genetic stability of simple sequence repeats and in the repair of heteroduplex sites present in meiotic recombination intermediates.</text>
</comment>
<comment type="biophysicochemical properties">
    <kinetics>
        <KM evidence="4">1.5 mM for ATP</KM>
    </kinetics>
</comment>
<comment type="subunit">
    <text evidence="13">Heterodimer of MLH1 and PMS1, called MutLalpha, which is the major MMR MutL activity correcting base-base mismatches as well as IDLs. The heterodimer binds double strand DNA independently of a mismatch with positive cooperativity and has more than one DNA binding site. Forms a ternary complex with either the MSH2-MSH6 (MutSalpha) or the MSH2-MSH3 heterodimer (MutSbeta), which recognize and bind to mismatch DNA. Ternary complex formation is promoted by ATP binding.</text>
</comment>
<comment type="interaction">
    <interactant intactId="EBI-13561">
        <id>P14242</id>
    </interactant>
    <interactant intactId="EBI-11003">
        <id>P38920</id>
        <label>MLH1</label>
    </interactant>
    <organismsDiffer>false</organismsDiffer>
    <experiments>13</experiments>
</comment>
<comment type="subcellular location">
    <subcellularLocation>
        <location evidence="7">Nucleus</location>
    </subcellularLocation>
</comment>
<comment type="miscellaneous">
    <text evidence="8">Present with 521 molecules/cell in log phase SD medium.</text>
</comment>
<comment type="similarity">
    <text evidence="14">Belongs to the DNA mismatch repair MutL/HexB family.</text>
</comment>
<comment type="sequence caution" evidence="14">
    <conflict type="erroneous initiation">
        <sequence resource="EMBL-CDS" id="AAA34885"/>
    </conflict>
</comment>
<comment type="sequence caution" evidence="14">
    <conflict type="erroneous initiation">
        <sequence resource="EMBL-CDS" id="AAM00521"/>
    </conflict>
</comment>
<comment type="sequence caution" evidence="14">
    <conflict type="erroneous initiation">
        <sequence resource="EMBL-CDS" id="AAM00533"/>
    </conflict>
</comment>
<comment type="sequence caution" evidence="14">
    <conflict type="erroneous initiation">
        <sequence resource="EMBL-CDS" id="AAM00545"/>
    </conflict>
</comment>
<comment type="sequence caution" evidence="14">
    <conflict type="erroneous initiation">
        <sequence resource="EMBL-CDS" id="AAM00551"/>
    </conflict>
</comment>
<comment type="sequence caution" evidence="14">
    <conflict type="erroneous initiation">
        <sequence resource="EMBL-CDS" id="AAM00563"/>
    </conflict>
</comment>
<comment type="sequence caution" evidence="14">
    <conflict type="erroneous initiation">
        <sequence resource="EMBL-CDS" id="AAM00569"/>
    </conflict>
</comment>
<comment type="sequence caution" evidence="14">
    <conflict type="erroneous initiation">
        <sequence resource="EMBL-CDS" id="CAA60176"/>
    </conflict>
</comment>
<comment type="sequence caution" evidence="14">
    <conflict type="erroneous initiation">
        <sequence resource="EMBL-CDS" id="CAA61428"/>
    </conflict>
</comment>
<comment type="sequence caution" evidence="14">
    <conflict type="erroneous initiation">
        <sequence resource="EMBL-CDS" id="CAA95956"/>
    </conflict>
</comment>
<comment type="sequence caution" evidence="14">
    <conflict type="erroneous initiation">
        <sequence resource="EMBL-CDS" id="CAA95957"/>
    </conflict>
</comment>
<protein>
    <recommendedName>
        <fullName>DNA mismatch repair protein PMS1</fullName>
    </recommendedName>
    <alternativeName>
        <fullName>Postmeiotic segregation protein 1</fullName>
    </alternativeName>
</protein>
<sequence>MTQIHQINDIDVHRITSGQVITDLTTAVKELVDNSIDANANQIEIIFKDYGLESIECSDNGDGIDPSNYEFLALKHYTSKIAKFQDVAKVQTLGFRGEALSSLCGIAKLSVITTTSPPKADKLEYDMVGHITSKTTTSRNKGTTVLVSQLFHNLPVRQKEFSKTFKRQFTKCLTVIQGYAIINAAIKFSVWNITPKGKKNLILSTMRNSSMRKNISSVFGAGGMRGLEEVDLVLDLNPFKNRMLGKYTDDPDFLDLDYKIRVKGYISQNSFGCGRNSKDRQFIYVNKRPVEYSTLLKCCNEVYKTFNNVQFPAVFLNLELPMSLIDVNVTPDKRVILLHNERAVIDIFKTTLSDYYNRQELALPKRMCSQSEQQAQKRLKTEVFDDRSTTHESDNENYHTARSESNQSNHAHFNSTTGVIDKSNGTELTSVMDGNYTNVTDVIGSECEVSVDSSVVLDEGNSSTPTKKLPSIKTDSQNLSDLNLNNFSNPEFQNITSPDKARSLEKVVEEPVYFDIDGEKFQEKAVLSQADGLVFVDNECHEHTNDCCHQERRGSTDTEQDDEADSIYAEIEPVEINVRTPLKNSRKSISKDNYRSLSDGLTHRKFEDEILEYNLSTKNFKEISKNGKQMSSIISKRKSEAQENIIKNKDELEDFEQGEKYLTLTVSKNDFKKMEVVGQFNLGFIIVTRKVDNKYDLFIVDQHASDEKYNFETLQAVTVFKSQKLIIPQPVELSVIDELVVLDNLPVFEKNGFKLKIDEEEEFGSRVKLLSLPTSKQTLFDLGDFNELIHLIKEDGGLRRDNIRCSKIRSMFAMRACRSSIMIGKPLNKKTMTRVVHNLSELDKPWNCPHGRPTMRHLMELRDWSSFSKDYEI</sequence>
<reference key="1">
    <citation type="journal article" date="1989" name="J. Bacteriol.">
        <title>Cloning and nucleotide sequence of DNA mismatch repair gene PMS1 from Saccharomyces cerevisiae: homology of PMS1 to procaryotic MutL and HexB.</title>
        <authorList>
            <person name="Kramer W."/>
            <person name="Kramer B."/>
            <person name="Williamson M.S."/>
            <person name="Fogel S."/>
        </authorList>
    </citation>
    <scope>NUCLEOTIDE SEQUENCE [GENOMIC DNA]</scope>
</reference>
<reference key="2">
    <citation type="journal article" date="2002" name="Nature">
        <title>Dissecting the architecture of a quantitative trait locus in yeast.</title>
        <authorList>
            <person name="Steinmetz L.M."/>
            <person name="Sinha H."/>
            <person name="Richards D.R."/>
            <person name="Spiegelman J.I."/>
            <person name="Oefner P.J."/>
            <person name="McCusker J.H."/>
            <person name="Davis R.W."/>
        </authorList>
    </citation>
    <scope>NUCLEOTIDE SEQUENCE [GENOMIC DNA]</scope>
    <scope>VARIANTS SER-41; THR-112; VAL-384; VAL-392; SER-400; SER-401; CYS-GLU-GLY-THR-416 INS; ASN-475; VAL-564; ARG-768 AND LYS-818</scope>
    <source>
        <strain>ATCC 200060 / W303</strain>
        <strain>S96</strain>
        <strain>SK1</strain>
        <strain>YJM 339</strain>
        <strain>YJM 421</strain>
    </source>
</reference>
<reference key="3">
    <citation type="journal article" date="2005" name="Nat. Genet.">
        <title>Quantitative trait loci mapped to single-nucleotide resolution in yeast.</title>
        <authorList>
            <person name="Deutschbauer A.M."/>
            <person name="Davis R.W."/>
        </authorList>
    </citation>
    <scope>NUCLEOTIDE SEQUENCE [GENOMIC DNA]</scope>
    <scope>VARIANTS SER-41; THR-112; VAL-384; SER-400; CYS-GLU-GLY-THR-416 INS; PHE-513 AND LYS-818</scope>
    <source>
        <strain>SK1</strain>
    </source>
</reference>
<reference key="4">
    <citation type="journal article" date="2006" name="Proc. Natl. Acad. Sci. U.S.A.">
        <title>Negative epistasis between natural variants of the Saccharomyces cerevisiae MLH1 and PMS1 genes results in a defect in mismatch repair.</title>
        <authorList>
            <person name="Heck J.A."/>
            <person name="Argueso J.L."/>
            <person name="Gemici Z."/>
            <person name="Reeves R.G."/>
            <person name="Bernard A."/>
            <person name="Aquadro C.F."/>
            <person name="Alani E."/>
        </authorList>
    </citation>
    <scope>NUCLEOTIDE SEQUENCE [GENOMIC DNA]</scope>
    <scope>VARIANT TYR-458</scope>
    <source>
        <strain>EAY1066</strain>
        <strain>EAY1068</strain>
        <strain>M2-8</strain>
        <strain>M5-7</strain>
        <strain>M7-8</strain>
    </source>
</reference>
<reference key="5">
    <citation type="journal article" date="1996" name="Yeast">
        <title>Sequencing a cosmid clone of Saccharomyces cerevisiae chromosome XIV reveals 12 new open reading frames (ORFs) and an ancient duplication of six ORFs.</title>
        <authorList>
            <person name="Poehlmann R."/>
            <person name="Philippsen P."/>
        </authorList>
    </citation>
    <scope>NUCLEOTIDE SEQUENCE [GENOMIC DNA]</scope>
    <source>
        <strain>ATCC 96604 / S288c / FY1679</strain>
    </source>
</reference>
<reference key="6">
    <citation type="journal article" date="1997" name="Nature">
        <title>The nucleotide sequence of Saccharomyces cerevisiae chromosome XIV and its evolutionary implications.</title>
        <authorList>
            <person name="Philippsen P."/>
            <person name="Kleine K."/>
            <person name="Poehlmann R."/>
            <person name="Duesterhoeft A."/>
            <person name="Hamberg K."/>
            <person name="Hegemann J.H."/>
            <person name="Obermaier B."/>
            <person name="Urrestarazu L.A."/>
            <person name="Aert R."/>
            <person name="Albermann K."/>
            <person name="Altmann R."/>
            <person name="Andre B."/>
            <person name="Baladron V."/>
            <person name="Ballesta J.P.G."/>
            <person name="Becam A.-M."/>
            <person name="Beinhauer J.D."/>
            <person name="Boskovic J."/>
            <person name="Buitrago M.J."/>
            <person name="Bussereau F."/>
            <person name="Coster F."/>
            <person name="Crouzet M."/>
            <person name="D'Angelo M."/>
            <person name="Dal Pero F."/>
            <person name="De Antoni A."/>
            <person name="del Rey F."/>
            <person name="Doignon F."/>
            <person name="Domdey H."/>
            <person name="Dubois E."/>
            <person name="Fiedler T.A."/>
            <person name="Fleig U."/>
            <person name="Floeth M."/>
            <person name="Fritz C."/>
            <person name="Gaillardin C."/>
            <person name="Garcia-Cantalejo J.M."/>
            <person name="Glansdorff N."/>
            <person name="Goffeau A."/>
            <person name="Gueldener U."/>
            <person name="Herbert C.J."/>
            <person name="Heumann K."/>
            <person name="Heuss-Neitzel D."/>
            <person name="Hilbert H."/>
            <person name="Hinni K."/>
            <person name="Iraqui Houssaini I."/>
            <person name="Jacquet M."/>
            <person name="Jimenez A."/>
            <person name="Jonniaux J.-L."/>
            <person name="Karpfinger-Hartl L."/>
            <person name="Lanfranchi G."/>
            <person name="Lepingle A."/>
            <person name="Levesque H."/>
            <person name="Lyck R."/>
            <person name="Maftahi M."/>
            <person name="Mallet L."/>
            <person name="Maurer C.T.C."/>
            <person name="Messenguy F."/>
            <person name="Mewes H.-W."/>
            <person name="Moestl D."/>
            <person name="Nasr F."/>
            <person name="Nicaud J.-M."/>
            <person name="Niedenthal R.K."/>
            <person name="Pandolfo D."/>
            <person name="Pierard A."/>
            <person name="Piravandi E."/>
            <person name="Planta R.J."/>
            <person name="Pohl T.M."/>
            <person name="Purnelle B."/>
            <person name="Rebischung C."/>
            <person name="Remacha M.A."/>
            <person name="Revuelta J.L."/>
            <person name="Rinke M."/>
            <person name="Saiz J.E."/>
            <person name="Sartorello F."/>
            <person name="Scherens B."/>
            <person name="Sen-Gupta M."/>
            <person name="Soler-Mira A."/>
            <person name="Urbanus J.H.M."/>
            <person name="Valle G."/>
            <person name="Van Dyck L."/>
            <person name="Verhasselt P."/>
            <person name="Vierendeels F."/>
            <person name="Vissers S."/>
            <person name="Voet M."/>
            <person name="Volckaert G."/>
            <person name="Wach A."/>
            <person name="Wambutt R."/>
            <person name="Wedler H."/>
            <person name="Zollner A."/>
            <person name="Hani J."/>
        </authorList>
    </citation>
    <scope>NUCLEOTIDE SEQUENCE [LARGE SCALE GENOMIC DNA]</scope>
    <source>
        <strain>ATCC 204508 / S288c</strain>
    </source>
</reference>
<reference key="7">
    <citation type="journal article" date="2014" name="G3 (Bethesda)">
        <title>The reference genome sequence of Saccharomyces cerevisiae: Then and now.</title>
        <authorList>
            <person name="Engel S.R."/>
            <person name="Dietrich F.S."/>
            <person name="Fisk D.G."/>
            <person name="Binkley G."/>
            <person name="Balakrishnan R."/>
            <person name="Costanzo M.C."/>
            <person name="Dwight S.S."/>
            <person name="Hitz B.C."/>
            <person name="Karra K."/>
            <person name="Nash R.S."/>
            <person name="Weng S."/>
            <person name="Wong E.D."/>
            <person name="Lloyd P."/>
            <person name="Skrzypek M.S."/>
            <person name="Miyasato S.R."/>
            <person name="Simison M."/>
            <person name="Cherry J.M."/>
        </authorList>
    </citation>
    <scope>GENOME REANNOTATION</scope>
    <source>
        <strain>ATCC 204508 / S288c</strain>
    </source>
</reference>
<reference key="8">
    <citation type="journal article" date="1996" name="Yeast">
        <title>The sequence of a 17,933 bp segment of Saccharomyces cerevisiae chromosome XIV contains the RHO2, TOP2, MKT1 and END3 genes and five new open reading frames.</title>
        <authorList>
            <person name="Soler-Mira A."/>
            <person name="Saiz J.E."/>
            <person name="Ballesta J.P.G."/>
            <person name="Remacha M.A."/>
        </authorList>
    </citation>
    <scope>NUCLEOTIDE SEQUENCE [GENOMIC DNA] OF 1-225</scope>
    <source>
        <strain>ATCC 96604 / S288c / FY1679</strain>
    </source>
</reference>
<reference key="9">
    <citation type="journal article" date="1997" name="Mol. Cell. Biol.">
        <title>Functional domains of the Saccharomyces cerevisiae Mlh1p and Pms1p DNA mismatch repair proteins and their relevance to human hereditary nonpolyposis colorectal cancer-associated mutations.</title>
        <authorList>
            <person name="Pang Q."/>
            <person name="Prolla T.A."/>
            <person name="Liskay R.M."/>
        </authorList>
    </citation>
    <scope>INTERACTION WITH MLH1</scope>
    <scope>MUTAGENESIS OF PHE-95</scope>
</reference>
<reference key="10">
    <citation type="journal article" date="1998" name="J. Biol. Chem.">
        <title>ATP-dependent assembly of a ternary complex consisting of a DNA mismatch and the yeast MSH2-MSH6 and MLH1-PMS1 protein complexes.</title>
        <authorList>
            <person name="Habraken Y."/>
            <person name="Sung P."/>
            <person name="Prakash L."/>
            <person name="Prakash S."/>
        </authorList>
    </citation>
    <scope>FUNCTION</scope>
    <scope>SUBUNIT</scope>
</reference>
<reference key="11">
    <citation type="journal article" date="1999" name="Proc. Natl. Acad. Sci. U.S.A.">
        <title>Functional specificity of MutL homologs in yeast: evidence for three Mlh1-based heterocomplexes with distinct roles during meiosis in recombination and mismatch correction.</title>
        <authorList>
            <person name="Wang T.-F."/>
            <person name="Kleckner N."/>
            <person name="Hunter N."/>
        </authorList>
    </citation>
    <scope>FUNCTION</scope>
    <scope>INTERACTION WITH MLH1</scope>
</reference>
<reference key="12">
    <citation type="journal article" date="2000" name="Mol. Cell. Biol.">
        <title>Functional studies on the candidate ATPase domains of Saccharomyces cerevisiae MutLalpha.</title>
        <authorList>
            <person name="Tran P.T."/>
            <person name="Liskay R.M."/>
        </authorList>
    </citation>
    <scope>INTERACTION WITH MLH1</scope>
    <scope>ATP-BINDING</scope>
    <scope>MUTAGENESIS OF GLU-30 AND GLY-97</scope>
</reference>
<reference key="13">
    <citation type="journal article" date="2002" name="Biol. Chem.">
        <title>DNA binding properties of the yeast Msh2-Msh6 and Mlh1-Pms1 heterodimers.</title>
        <authorList>
            <person name="Drotschmann K."/>
            <person name="Hall M.C."/>
            <person name="Shcherbakova P.V."/>
            <person name="Wang H."/>
            <person name="Erie D.A."/>
            <person name="Brownewell F.R."/>
            <person name="Kool E.T."/>
            <person name="Kunkel T.A."/>
        </authorList>
    </citation>
    <scope>DNA-BINDING</scope>
</reference>
<reference key="14">
    <citation type="journal article" date="2002" name="J. Biol. Chem.">
        <title>Differential ATP binding and intrinsic ATP hydrolysis by amino-terminal domains of the yeast Mlh1 and Pms1 proteins.</title>
        <authorList>
            <person name="Hall M.C."/>
            <person name="Shcherbakova P.V."/>
            <person name="Kunkel T.A."/>
        </authorList>
    </citation>
    <scope>ATP-BINDING</scope>
    <scope>MUTAGENESIS OF GLU-30 AND ASN-34</scope>
    <scope>BIOPHYSICOCHEMICAL PROPERTIES</scope>
</reference>
<reference key="15">
    <citation type="journal article" date="2003" name="Nature">
        <title>Sequencing and comparison of yeast species to identify genes and regulatory elements.</title>
        <authorList>
            <person name="Kellis M."/>
            <person name="Patterson N."/>
            <person name="Endrizzi M."/>
            <person name="Birren B.W."/>
            <person name="Lander E.S."/>
        </authorList>
    </citation>
    <scope>IDENTIFICATION OF PROBABLE INITIATION SITE</scope>
</reference>
<reference key="16">
    <citation type="journal article" date="2003" name="Nature">
        <title>Global analysis of protein localization in budding yeast.</title>
        <authorList>
            <person name="Huh W.-K."/>
            <person name="Falvo J.V."/>
            <person name="Gerke L.C."/>
            <person name="Carroll A.S."/>
            <person name="Howson R.W."/>
            <person name="Weissman J.S."/>
            <person name="O'Shea E.K."/>
        </authorList>
    </citation>
    <scope>SUBCELLULAR LOCATION [LARGE SCALE ANALYSIS]</scope>
</reference>
<reference key="17">
    <citation type="journal article" date="2003" name="Nature">
        <title>Global analysis of protein expression in yeast.</title>
        <authorList>
            <person name="Ghaemmaghami S."/>
            <person name="Huh W.-K."/>
            <person name="Bower K."/>
            <person name="Howson R.W."/>
            <person name="Belle A."/>
            <person name="Dephoure N."/>
            <person name="O'Shea E.K."/>
            <person name="Weissman J.S."/>
        </authorList>
    </citation>
    <scope>LEVEL OF PROTEIN EXPRESSION [LARGE SCALE ANALYSIS]</scope>
</reference>
<reference key="18">
    <citation type="journal article" date="2003" name="Nucleic Acids Res.">
        <title>DNA binding by yeast Mlh1 and Pms1: implications for DNA mismatch repair.</title>
        <authorList>
            <person name="Hall M.C."/>
            <person name="Shcherbakova P.V."/>
            <person name="Fortune J.M."/>
            <person name="Borchers C.H."/>
            <person name="Dial J.M."/>
            <person name="Tomer K.B."/>
            <person name="Kunkel T.A."/>
        </authorList>
    </citation>
    <scope>DNA-BINDING</scope>
    <scope>MUTAGENESIS OF LYS-297</scope>
</reference>
<reference key="19">
    <citation type="journal article" date="2005" name="Mol. Cell. Biol.">
        <title>Novel PMS1 alleles preferentially affect the repair of primer strand loops during DNA replication.</title>
        <authorList>
            <person name="Erdeniz N."/>
            <person name="Dudley S."/>
            <person name="Gealy R."/>
            <person name="Jinks-Robertson S."/>
            <person name="Liskay R.M."/>
        </authorList>
    </citation>
    <scope>FUNCTION</scope>
    <scope>MUTAGENESIS OF GLY-851 AND HIS-857</scope>
</reference>
<reference key="20">
    <citation type="journal article" date="2008" name="Mol. Cell. Proteomics">
        <title>A multidimensional chromatography technology for in-depth phosphoproteome analysis.</title>
        <authorList>
            <person name="Albuquerque C.P."/>
            <person name="Smolka M.B."/>
            <person name="Payne S.H."/>
            <person name="Bafna V."/>
            <person name="Eng J."/>
            <person name="Zhou H."/>
        </authorList>
    </citation>
    <scope>PHOSPHORYLATION [LARGE SCALE ANALYSIS] AT SER-393</scope>
    <scope>IDENTIFICATION BY MASS SPECTROMETRY [LARGE SCALE ANALYSIS]</scope>
</reference>
<reference key="21">
    <citation type="journal article" date="2009" name="Science">
        <title>Global analysis of Cdk1 substrate phosphorylation sites provides insights into evolution.</title>
        <authorList>
            <person name="Holt L.J."/>
            <person name="Tuch B.B."/>
            <person name="Villen J."/>
            <person name="Johnson A.D."/>
            <person name="Gygi S.P."/>
            <person name="Morgan D.O."/>
        </authorList>
    </citation>
    <scope>PHOSPHORYLATION [LARGE SCALE ANALYSIS] AT SER-566</scope>
    <scope>IDENTIFICATION BY MASS SPECTROMETRY [LARGE SCALE ANALYSIS]</scope>
</reference>
<name>PMS1_YEAST</name>